<protein>
    <recommendedName>
        <fullName>Phosphate metabolism protein 7</fullName>
    </recommendedName>
</protein>
<gene>
    <name type="primary">PHM7</name>
    <name type="ordered locus">YOL084W</name>
    <name type="ORF">00953</name>
</gene>
<proteinExistence type="evidence at protein level"/>
<organism>
    <name type="scientific">Saccharomyces cerevisiae (strain ATCC 204508 / S288c)</name>
    <name type="common">Baker's yeast</name>
    <dbReference type="NCBI Taxonomy" id="559292"/>
    <lineage>
        <taxon>Eukaryota</taxon>
        <taxon>Fungi</taxon>
        <taxon>Dikarya</taxon>
        <taxon>Ascomycota</taxon>
        <taxon>Saccharomycotina</taxon>
        <taxon>Saccharomycetes</taxon>
        <taxon>Saccharomycetales</taxon>
        <taxon>Saccharomycetaceae</taxon>
        <taxon>Saccharomyces</taxon>
    </lineage>
</organism>
<feature type="chain" id="PRO_0000262735" description="Phosphate metabolism protein 7">
    <location>
        <begin position="1"/>
        <end position="991"/>
    </location>
</feature>
<feature type="topological domain" description="Extracellular" evidence="2">
    <location>
        <begin position="1"/>
        <end position="9"/>
    </location>
</feature>
<feature type="transmembrane region" description="Helical" evidence="2">
    <location>
        <begin position="10"/>
        <end position="30"/>
    </location>
</feature>
<feature type="topological domain" description="Cytoplasmic" evidence="2">
    <location>
        <begin position="31"/>
        <end position="91"/>
    </location>
</feature>
<feature type="transmembrane region" description="Helical" evidence="2">
    <location>
        <begin position="92"/>
        <end position="112"/>
    </location>
</feature>
<feature type="topological domain" description="Extracellular" evidence="2">
    <location>
        <begin position="113"/>
        <end position="138"/>
    </location>
</feature>
<feature type="transmembrane region" description="Helical" evidence="2">
    <location>
        <begin position="139"/>
        <end position="159"/>
    </location>
</feature>
<feature type="topological domain" description="Cytoplasmic" evidence="2">
    <location>
        <begin position="160"/>
        <end position="388"/>
    </location>
</feature>
<feature type="transmembrane region" description="Helical" evidence="2">
    <location>
        <begin position="389"/>
        <end position="409"/>
    </location>
</feature>
<feature type="topological domain" description="Extracellular" evidence="2">
    <location>
        <begin position="410"/>
        <end position="437"/>
    </location>
</feature>
<feature type="transmembrane region" description="Helical" evidence="2">
    <location>
        <begin position="438"/>
        <end position="458"/>
    </location>
</feature>
<feature type="topological domain" description="Cytoplasmic" evidence="2">
    <location>
        <begin position="459"/>
        <end position="471"/>
    </location>
</feature>
<feature type="transmembrane region" description="Helical" evidence="2">
    <location>
        <begin position="472"/>
        <end position="492"/>
    </location>
</feature>
<feature type="topological domain" description="Extracellular" evidence="2">
    <location>
        <begin position="493"/>
        <end position="523"/>
    </location>
</feature>
<feature type="transmembrane region" description="Helical" evidence="2">
    <location>
        <begin position="524"/>
        <end position="544"/>
    </location>
</feature>
<feature type="topological domain" description="Cytoplasmic" evidence="2">
    <location>
        <begin position="545"/>
        <end position="582"/>
    </location>
</feature>
<feature type="transmembrane region" description="Helical" evidence="2">
    <location>
        <begin position="583"/>
        <end position="603"/>
    </location>
</feature>
<feature type="topological domain" description="Extracellular" evidence="2">
    <location>
        <position position="604"/>
    </location>
</feature>
<feature type="transmembrane region" description="Helical" evidence="2">
    <location>
        <begin position="605"/>
        <end position="625"/>
    </location>
</feature>
<feature type="topological domain" description="Cytoplasmic" evidence="2">
    <location>
        <begin position="626"/>
        <end position="637"/>
    </location>
</feature>
<feature type="transmembrane region" description="Helical" evidence="2">
    <location>
        <begin position="638"/>
        <end position="658"/>
    </location>
</feature>
<feature type="topological domain" description="Extracellular" evidence="2">
    <location>
        <begin position="659"/>
        <end position="661"/>
    </location>
</feature>
<feature type="transmembrane region" description="Helical" evidence="2">
    <location>
        <begin position="662"/>
        <end position="682"/>
    </location>
</feature>
<feature type="topological domain" description="Cytoplasmic" evidence="2">
    <location>
        <begin position="683"/>
        <end position="991"/>
    </location>
</feature>
<feature type="region of interest" description="Disordered" evidence="3">
    <location>
        <begin position="749"/>
        <end position="787"/>
    </location>
</feature>
<feature type="compositionally biased region" description="Polar residues" evidence="3">
    <location>
        <begin position="757"/>
        <end position="785"/>
    </location>
</feature>
<feature type="glycosylation site" description="N-linked (GlcNAc...) asparagine" evidence="2">
    <location>
        <position position="115"/>
    </location>
</feature>
<feature type="glycosylation site" description="N-linked (GlcNAc...) asparagine" evidence="2">
    <location>
        <position position="132"/>
    </location>
</feature>
<accession>Q12252</accession>
<accession>D6W1Y4</accession>
<keyword id="KW-0106">Calcium</keyword>
<keyword id="KW-1003">Cell membrane</keyword>
<keyword id="KW-0325">Glycoprotein</keyword>
<keyword id="KW-0407">Ion channel</keyword>
<keyword id="KW-0406">Ion transport</keyword>
<keyword id="KW-0472">Membrane</keyword>
<keyword id="KW-1185">Reference proteome</keyword>
<keyword id="KW-0812">Transmembrane</keyword>
<keyword id="KW-1133">Transmembrane helix</keyword>
<keyword id="KW-0813">Transport</keyword>
<comment type="function">
    <text evidence="1">Acts as an osmosensitive calcium-permeable cation channel.</text>
</comment>
<comment type="subcellular location">
    <subcellularLocation>
        <location evidence="5">Cell membrane</location>
        <topology evidence="5">Multi-pass membrane protein</topology>
    </subcellularLocation>
</comment>
<comment type="induction">
    <text evidence="4">Regulated by phosphate levels.</text>
</comment>
<comment type="similarity">
    <text evidence="6">Belongs to the CSC1 (TC 1.A.17) family.</text>
</comment>
<reference key="1">
    <citation type="journal article" date="1995" name="Yeast">
        <title>A 29.425 kb segment on the left arm of yeast chromosome XV contains more than twice as many unknown as known open reading frames.</title>
        <authorList>
            <person name="Zumstein E."/>
            <person name="Pearson B.M."/>
            <person name="Kalogeropoulos A."/>
            <person name="Schweizer M."/>
        </authorList>
    </citation>
    <scope>NUCLEOTIDE SEQUENCE [GENOMIC DNA]</scope>
    <source>
        <strain>ATCC 96604 / S288c / FY1679</strain>
    </source>
</reference>
<reference key="2">
    <citation type="journal article" date="1997" name="Nature">
        <title>The nucleotide sequence of Saccharomyces cerevisiae chromosome XV.</title>
        <authorList>
            <person name="Dujon B."/>
            <person name="Albermann K."/>
            <person name="Aldea M."/>
            <person name="Alexandraki D."/>
            <person name="Ansorge W."/>
            <person name="Arino J."/>
            <person name="Benes V."/>
            <person name="Bohn C."/>
            <person name="Bolotin-Fukuhara M."/>
            <person name="Bordonne R."/>
            <person name="Boyer J."/>
            <person name="Camasses A."/>
            <person name="Casamayor A."/>
            <person name="Casas C."/>
            <person name="Cheret G."/>
            <person name="Cziepluch C."/>
            <person name="Daignan-Fornier B."/>
            <person name="Dang V.-D."/>
            <person name="de Haan M."/>
            <person name="Delius H."/>
            <person name="Durand P."/>
            <person name="Fairhead C."/>
            <person name="Feldmann H."/>
            <person name="Gaillon L."/>
            <person name="Galisson F."/>
            <person name="Gamo F.-J."/>
            <person name="Gancedo C."/>
            <person name="Goffeau A."/>
            <person name="Goulding S.E."/>
            <person name="Grivell L.A."/>
            <person name="Habbig B."/>
            <person name="Hand N.J."/>
            <person name="Hani J."/>
            <person name="Hattenhorst U."/>
            <person name="Hebling U."/>
            <person name="Hernando Y."/>
            <person name="Herrero E."/>
            <person name="Heumann K."/>
            <person name="Hiesel R."/>
            <person name="Hilger F."/>
            <person name="Hofmann B."/>
            <person name="Hollenberg C.P."/>
            <person name="Hughes B."/>
            <person name="Jauniaux J.-C."/>
            <person name="Kalogeropoulos A."/>
            <person name="Katsoulou C."/>
            <person name="Kordes E."/>
            <person name="Lafuente M.J."/>
            <person name="Landt O."/>
            <person name="Louis E.J."/>
            <person name="Maarse A.C."/>
            <person name="Madania A."/>
            <person name="Mannhaupt G."/>
            <person name="Marck C."/>
            <person name="Martin R.P."/>
            <person name="Mewes H.-W."/>
            <person name="Michaux G."/>
            <person name="Paces V."/>
            <person name="Parle-McDermott A.G."/>
            <person name="Pearson B.M."/>
            <person name="Perrin A."/>
            <person name="Pettersson B."/>
            <person name="Poch O."/>
            <person name="Pohl T.M."/>
            <person name="Poirey R."/>
            <person name="Portetelle D."/>
            <person name="Pujol A."/>
            <person name="Purnelle B."/>
            <person name="Ramezani Rad M."/>
            <person name="Rechmann S."/>
            <person name="Schwager C."/>
            <person name="Schweizer M."/>
            <person name="Sor F."/>
            <person name="Sterky F."/>
            <person name="Tarassov I.A."/>
            <person name="Teodoru C."/>
            <person name="Tettelin H."/>
            <person name="Thierry A."/>
            <person name="Tobiasch E."/>
            <person name="Tzermia M."/>
            <person name="Uhlen M."/>
            <person name="Unseld M."/>
            <person name="Valens M."/>
            <person name="Vandenbol M."/>
            <person name="Vetter I."/>
            <person name="Vlcek C."/>
            <person name="Voet M."/>
            <person name="Volckaert G."/>
            <person name="Voss H."/>
            <person name="Wambutt R."/>
            <person name="Wedler H."/>
            <person name="Wiemann S."/>
            <person name="Winsor B."/>
            <person name="Wolfe K.H."/>
            <person name="Zollner A."/>
            <person name="Zumstein E."/>
            <person name="Kleine K."/>
        </authorList>
    </citation>
    <scope>NUCLEOTIDE SEQUENCE [LARGE SCALE GENOMIC DNA]</scope>
    <source>
        <strain>ATCC 204508 / S288c</strain>
    </source>
</reference>
<reference key="3">
    <citation type="journal article" date="2014" name="G3 (Bethesda)">
        <title>The reference genome sequence of Saccharomyces cerevisiae: Then and now.</title>
        <authorList>
            <person name="Engel S.R."/>
            <person name="Dietrich F.S."/>
            <person name="Fisk D.G."/>
            <person name="Binkley G."/>
            <person name="Balakrishnan R."/>
            <person name="Costanzo M.C."/>
            <person name="Dwight S.S."/>
            <person name="Hitz B.C."/>
            <person name="Karra K."/>
            <person name="Nash R.S."/>
            <person name="Weng S."/>
            <person name="Wong E.D."/>
            <person name="Lloyd P."/>
            <person name="Skrzypek M.S."/>
            <person name="Miyasato S.R."/>
            <person name="Simison M."/>
            <person name="Cherry J.M."/>
        </authorList>
    </citation>
    <scope>GENOME REANNOTATION</scope>
    <source>
        <strain>ATCC 204508 / S288c</strain>
    </source>
</reference>
<reference key="4">
    <citation type="journal article" date="2000" name="Mol. Biol. Cell">
        <title>New components of a system for phosphate accumulation and polyphosphate metabolism in Saccharomyces cerevisiae revealed by genomic expression analysis.</title>
        <authorList>
            <person name="Ogawa N."/>
            <person name="DeRisi J.L."/>
            <person name="Brown P.O."/>
        </authorList>
    </citation>
    <scope>INDUCTION</scope>
</reference>
<reference key="5">
    <citation type="journal article" date="2003" name="Nature">
        <title>Global analysis of protein localization in budding yeast.</title>
        <authorList>
            <person name="Huh W.-K."/>
            <person name="Falvo J.V."/>
            <person name="Gerke L.C."/>
            <person name="Carroll A.S."/>
            <person name="Howson R.W."/>
            <person name="Weissman J.S."/>
            <person name="O'Shea E.K."/>
        </authorList>
    </citation>
    <scope>SUBCELLULAR LOCATION [LARGE SCALE ANALYSIS]</scope>
</reference>
<reference key="6">
    <citation type="journal article" date="2006" name="Proc. Natl. Acad. Sci. U.S.A.">
        <title>A global topology map of the Saccharomyces cerevisiae membrane proteome.</title>
        <authorList>
            <person name="Kim H."/>
            <person name="Melen K."/>
            <person name="Oesterberg M."/>
            <person name="von Heijne G."/>
        </authorList>
    </citation>
    <scope>TOPOLOGY [LARGE SCALE ANALYSIS]</scope>
    <source>
        <strain>ATCC 208353 / W303-1A</strain>
    </source>
</reference>
<reference key="7">
    <citation type="journal article" date="2007" name="Proc. Natl. Acad. Sci. U.S.A.">
        <title>Analysis of phosphorylation sites on proteins from Saccharomyces cerevisiae by electron transfer dissociation (ETD) mass spectrometry.</title>
        <authorList>
            <person name="Chi A."/>
            <person name="Huttenhower C."/>
            <person name="Geer L.Y."/>
            <person name="Coon J.J."/>
            <person name="Syka J.E.P."/>
            <person name="Bai D.L."/>
            <person name="Shabanowitz J."/>
            <person name="Burke D.J."/>
            <person name="Troyanskaya O.G."/>
            <person name="Hunt D.F."/>
        </authorList>
    </citation>
    <scope>IDENTIFICATION BY MASS SPECTROMETRY [LARGE SCALE ANALYSIS]</scope>
</reference>
<dbReference type="EMBL" id="X83121">
    <property type="protein sequence ID" value="CAA58195.1"/>
    <property type="molecule type" value="Genomic_DNA"/>
</dbReference>
<dbReference type="EMBL" id="Z74826">
    <property type="protein sequence ID" value="CAA99096.1"/>
    <property type="molecule type" value="Genomic_DNA"/>
</dbReference>
<dbReference type="EMBL" id="BK006948">
    <property type="protein sequence ID" value="DAA10700.1"/>
    <property type="molecule type" value="Genomic_DNA"/>
</dbReference>
<dbReference type="PIR" id="S57385">
    <property type="entry name" value="S57385"/>
</dbReference>
<dbReference type="RefSeq" id="NP_014557.1">
    <property type="nucleotide sequence ID" value="NM_001183338.1"/>
</dbReference>
<dbReference type="SMR" id="Q12252"/>
<dbReference type="BioGRID" id="34318">
    <property type="interactions" value="92"/>
</dbReference>
<dbReference type="FunCoup" id="Q12252">
    <property type="interactions" value="238"/>
</dbReference>
<dbReference type="IntAct" id="Q12252">
    <property type="interactions" value="1"/>
</dbReference>
<dbReference type="STRING" id="4932.YOL084W"/>
<dbReference type="TCDB" id="1.A.17.5.6">
    <property type="family name" value="the calcium-dependent chloride channel (ca-clc) family"/>
</dbReference>
<dbReference type="GlyCosmos" id="Q12252">
    <property type="glycosylation" value="2 sites, No reported glycans"/>
</dbReference>
<dbReference type="GlyGen" id="Q12252">
    <property type="glycosylation" value="2 sites"/>
</dbReference>
<dbReference type="iPTMnet" id="Q12252"/>
<dbReference type="PaxDb" id="4932-YOL084W"/>
<dbReference type="PeptideAtlas" id="Q12252"/>
<dbReference type="EnsemblFungi" id="YOL084W_mRNA">
    <property type="protein sequence ID" value="YOL084W"/>
    <property type="gene ID" value="YOL084W"/>
</dbReference>
<dbReference type="GeneID" id="854070"/>
<dbReference type="KEGG" id="sce:YOL084W"/>
<dbReference type="AGR" id="SGD:S000005444"/>
<dbReference type="SGD" id="S000005444">
    <property type="gene designation" value="PHM7"/>
</dbReference>
<dbReference type="VEuPathDB" id="FungiDB:YOL084W"/>
<dbReference type="eggNOG" id="KOG1134">
    <property type="taxonomic scope" value="Eukaryota"/>
</dbReference>
<dbReference type="HOGENOM" id="CLU_002458_2_1_1"/>
<dbReference type="InParanoid" id="Q12252"/>
<dbReference type="OMA" id="NWACVAL"/>
<dbReference type="OrthoDB" id="1076608at2759"/>
<dbReference type="BioCyc" id="YEAST:G3O-33487-MONOMER"/>
<dbReference type="Reactome" id="R-SCE-6798695">
    <property type="pathway name" value="Neutrophil degranulation"/>
</dbReference>
<dbReference type="BioGRID-ORCS" id="854070">
    <property type="hits" value="1 hit in 10 CRISPR screens"/>
</dbReference>
<dbReference type="PRO" id="PR:Q12252"/>
<dbReference type="Proteomes" id="UP000002311">
    <property type="component" value="Chromosome XV"/>
</dbReference>
<dbReference type="RNAct" id="Q12252">
    <property type="molecule type" value="protein"/>
</dbReference>
<dbReference type="GO" id="GO:0005783">
    <property type="term" value="C:endoplasmic reticulum"/>
    <property type="evidence" value="ECO:0007005"/>
    <property type="project" value="SGD"/>
</dbReference>
<dbReference type="GO" id="GO:0000324">
    <property type="term" value="C:fungal-type vacuole"/>
    <property type="evidence" value="ECO:0007005"/>
    <property type="project" value="SGD"/>
</dbReference>
<dbReference type="GO" id="GO:0005886">
    <property type="term" value="C:plasma membrane"/>
    <property type="evidence" value="ECO:0000318"/>
    <property type="project" value="GO_Central"/>
</dbReference>
<dbReference type="GO" id="GO:0005227">
    <property type="term" value="F:calcium-activated cation channel activity"/>
    <property type="evidence" value="ECO:0000318"/>
    <property type="project" value="GO_Central"/>
</dbReference>
<dbReference type="GO" id="GO:0006817">
    <property type="term" value="P:phosphate ion transport"/>
    <property type="evidence" value="ECO:0000315"/>
    <property type="project" value="SGD"/>
</dbReference>
<dbReference type="InterPro" id="IPR045122">
    <property type="entry name" value="Csc1-like"/>
</dbReference>
<dbReference type="InterPro" id="IPR003864">
    <property type="entry name" value="CSC1/OSCA1-like_7TM"/>
</dbReference>
<dbReference type="InterPro" id="IPR027815">
    <property type="entry name" value="CSC1/OSCA1-like_cyt"/>
</dbReference>
<dbReference type="InterPro" id="IPR032880">
    <property type="entry name" value="Csc1/OSCA1-like_N"/>
</dbReference>
<dbReference type="InterPro" id="IPR022257">
    <property type="entry name" value="PHM7_ext"/>
</dbReference>
<dbReference type="PANTHER" id="PTHR13018:SF139">
    <property type="entry name" value="PHOSPHATE METABOLISM PROTEIN 7"/>
    <property type="match status" value="1"/>
</dbReference>
<dbReference type="PANTHER" id="PTHR13018">
    <property type="entry name" value="PROBABLE MEMBRANE PROTEIN DUF221-RELATED"/>
    <property type="match status" value="1"/>
</dbReference>
<dbReference type="Pfam" id="PF14703">
    <property type="entry name" value="PHM7_cyt"/>
    <property type="match status" value="1"/>
</dbReference>
<dbReference type="Pfam" id="PF12621">
    <property type="entry name" value="PHM7_ext"/>
    <property type="match status" value="1"/>
</dbReference>
<dbReference type="Pfam" id="PF02714">
    <property type="entry name" value="RSN1_7TM"/>
    <property type="match status" value="1"/>
</dbReference>
<dbReference type="Pfam" id="PF13967">
    <property type="entry name" value="RSN1_TM"/>
    <property type="match status" value="1"/>
</dbReference>
<evidence type="ECO:0000250" key="1"/>
<evidence type="ECO:0000255" key="2"/>
<evidence type="ECO:0000256" key="3">
    <source>
        <dbReference type="SAM" id="MobiDB-lite"/>
    </source>
</evidence>
<evidence type="ECO:0000269" key="4">
    <source>
    </source>
</evidence>
<evidence type="ECO:0000269" key="5">
    <source>
    </source>
</evidence>
<evidence type="ECO:0000305" key="6"/>
<name>PHM7_YEAST</name>
<sequence length="991" mass="112546">MADSSSTSAFISTLIIYGLTAVVFVWLFLLLRPKNRRVYEPRSLKDIQTIPEEERTEPVPEGYFGWVEYLLSKPHSFLIQHTSVDGYFLLRYIGIVGSLSFVGCLLLLPILLPVNATNGNNLQGFELLSFSNVTNKNRFYAHVFLSWIFFGLFTYVIYKELYYYVVFRHAMQTTPLYDGLLSSRTVIVTELHKSIAQEGEMQMRFPKASNVAFAYDLSDLQELCKERAKNAAKYEAALNKVLNKCVKMTRNKTQKQLDKLYNNGTKPKDDLETYVPHKKRPKHRLGKLPLCLGGKKVNTLSYSSKRIGELNEEIHEKQADWASNDRQPACFIQFETQLEAQRCYQSVEAILGKKNFGKRLIGYSPEDVNWGSMRLSSKERHSRRAVANTIMVLLIIFWAFPVAVVGIISNVNFLTDKVPFLRFINNMPTFLMGVITGLLPTIALVVLMSLVPPFIVMLGKLSGCVTRQETDLYSQAWYYAFAVIQIFLVVTATSSASSTVDSIIDRPRSAMTLLANNLPKASNFYIMYFILKGLTGPTWTILQAVNLLLSKVLGRVLDSTPRQKWNRYNTLATPRMGIVYPGIEILVCIYICYSIIAPILLFFSTVMLTLLYVAYLYNLNYVFGFSFDLKGRNYPRALFQIFVGIYLSEVCLLGLFIMAKTWGPLVLEVFWIVVTALAHIYMKRKFIPLFDAVPLSAIRHARGEPGYSYPTSDLGLQEIKDIADEMKGKYEQDNTHGILTPVTKDDLKKANLIPDNDGSSENGTPSNPFESGSERASLSGSNAESDSIKKLNDTVIKKSSTLSSSTKDNNESTFVPEGEKFRKFHYSDVEALRNKRPYDEDDHSKHGPEGAVPVNADAGVIYSDPAAVMKEPQAFPPDVLETNTWTRRILQFFNPRRSYPFDSVRMRFPLVFNTSIEYDEEYLSSAYTDPCVREKDPIVWCCKDPLGVSKQQIQEARSNGLDVRDDFTRYDEKGKVIFTYNPPDYEPEAKK</sequence>